<name>RS17_SYNS3</name>
<protein>
    <recommendedName>
        <fullName evidence="1">Small ribosomal subunit protein uS17</fullName>
    </recommendedName>
    <alternativeName>
        <fullName evidence="2">30S ribosomal protein S17</fullName>
    </alternativeName>
</protein>
<evidence type="ECO:0000255" key="1">
    <source>
        <dbReference type="HAMAP-Rule" id="MF_01345"/>
    </source>
</evidence>
<evidence type="ECO:0000305" key="2"/>
<organism>
    <name type="scientific">Synechococcus sp. (strain CC9311)</name>
    <dbReference type="NCBI Taxonomy" id="64471"/>
    <lineage>
        <taxon>Bacteria</taxon>
        <taxon>Bacillati</taxon>
        <taxon>Cyanobacteriota</taxon>
        <taxon>Cyanophyceae</taxon>
        <taxon>Synechococcales</taxon>
        <taxon>Synechococcaceae</taxon>
        <taxon>Synechococcus</taxon>
    </lineage>
</organism>
<keyword id="KW-1185">Reference proteome</keyword>
<keyword id="KW-0687">Ribonucleoprotein</keyword>
<keyword id="KW-0689">Ribosomal protein</keyword>
<keyword id="KW-0694">RNA-binding</keyword>
<keyword id="KW-0699">rRNA-binding</keyword>
<reference key="1">
    <citation type="journal article" date="2006" name="Proc. Natl. Acad. Sci. U.S.A.">
        <title>Genome sequence of Synechococcus CC9311: insights into adaptation to a coastal environment.</title>
        <authorList>
            <person name="Palenik B."/>
            <person name="Ren Q."/>
            <person name="Dupont C.L."/>
            <person name="Myers G.S."/>
            <person name="Heidelberg J.F."/>
            <person name="Badger J.H."/>
            <person name="Madupu R."/>
            <person name="Nelson W.C."/>
            <person name="Brinkac L.M."/>
            <person name="Dodson R.J."/>
            <person name="Durkin A.S."/>
            <person name="Daugherty S.C."/>
            <person name="Sullivan S.A."/>
            <person name="Khouri H."/>
            <person name="Mohamoud Y."/>
            <person name="Halpin R."/>
            <person name="Paulsen I.T."/>
        </authorList>
    </citation>
    <scope>NUCLEOTIDE SEQUENCE [LARGE SCALE GENOMIC DNA]</scope>
    <source>
        <strain>CC9311</strain>
    </source>
</reference>
<accession>Q0ID14</accession>
<proteinExistence type="inferred from homology"/>
<sequence>MALKERVGTVVSDKMDKTVVVAVENRFPHPIYQKTVSRTTRYKAHDEDNACRVGDRVRITETRPLSRHKRWAIAEVLSQSPKAEEVTK</sequence>
<dbReference type="EMBL" id="CP000435">
    <property type="protein sequence ID" value="ABI47423.1"/>
    <property type="molecule type" value="Genomic_DNA"/>
</dbReference>
<dbReference type="RefSeq" id="WP_011618391.1">
    <property type="nucleotide sequence ID" value="NC_008319.1"/>
</dbReference>
<dbReference type="SMR" id="Q0ID14"/>
<dbReference type="STRING" id="64471.sync_0428"/>
<dbReference type="KEGG" id="syg:sync_0428"/>
<dbReference type="eggNOG" id="COG0186">
    <property type="taxonomic scope" value="Bacteria"/>
</dbReference>
<dbReference type="HOGENOM" id="CLU_073626_1_2_3"/>
<dbReference type="OrthoDB" id="9811714at2"/>
<dbReference type="Proteomes" id="UP000001961">
    <property type="component" value="Chromosome"/>
</dbReference>
<dbReference type="GO" id="GO:0022627">
    <property type="term" value="C:cytosolic small ribosomal subunit"/>
    <property type="evidence" value="ECO:0007669"/>
    <property type="project" value="TreeGrafter"/>
</dbReference>
<dbReference type="GO" id="GO:0019843">
    <property type="term" value="F:rRNA binding"/>
    <property type="evidence" value="ECO:0007669"/>
    <property type="project" value="UniProtKB-UniRule"/>
</dbReference>
<dbReference type="GO" id="GO:0003735">
    <property type="term" value="F:structural constituent of ribosome"/>
    <property type="evidence" value="ECO:0007669"/>
    <property type="project" value="InterPro"/>
</dbReference>
<dbReference type="GO" id="GO:0006412">
    <property type="term" value="P:translation"/>
    <property type="evidence" value="ECO:0007669"/>
    <property type="project" value="UniProtKB-UniRule"/>
</dbReference>
<dbReference type="CDD" id="cd00364">
    <property type="entry name" value="Ribosomal_uS17"/>
    <property type="match status" value="1"/>
</dbReference>
<dbReference type="Gene3D" id="2.40.50.140">
    <property type="entry name" value="Nucleic acid-binding proteins"/>
    <property type="match status" value="1"/>
</dbReference>
<dbReference type="HAMAP" id="MF_01345_B">
    <property type="entry name" value="Ribosomal_uS17_B"/>
    <property type="match status" value="1"/>
</dbReference>
<dbReference type="InterPro" id="IPR012340">
    <property type="entry name" value="NA-bd_OB-fold"/>
</dbReference>
<dbReference type="InterPro" id="IPR000266">
    <property type="entry name" value="Ribosomal_uS17"/>
</dbReference>
<dbReference type="InterPro" id="IPR019984">
    <property type="entry name" value="Ribosomal_uS17_bact/chlr"/>
</dbReference>
<dbReference type="InterPro" id="IPR019979">
    <property type="entry name" value="Ribosomal_uS17_CS"/>
</dbReference>
<dbReference type="NCBIfam" id="NF004123">
    <property type="entry name" value="PRK05610.1"/>
    <property type="match status" value="1"/>
</dbReference>
<dbReference type="NCBIfam" id="TIGR03635">
    <property type="entry name" value="uS17_bact"/>
    <property type="match status" value="1"/>
</dbReference>
<dbReference type="PANTHER" id="PTHR10744">
    <property type="entry name" value="40S RIBOSOMAL PROTEIN S11 FAMILY MEMBER"/>
    <property type="match status" value="1"/>
</dbReference>
<dbReference type="PANTHER" id="PTHR10744:SF1">
    <property type="entry name" value="SMALL RIBOSOMAL SUBUNIT PROTEIN US17M"/>
    <property type="match status" value="1"/>
</dbReference>
<dbReference type="Pfam" id="PF00366">
    <property type="entry name" value="Ribosomal_S17"/>
    <property type="match status" value="1"/>
</dbReference>
<dbReference type="PRINTS" id="PR00973">
    <property type="entry name" value="RIBOSOMALS17"/>
</dbReference>
<dbReference type="SUPFAM" id="SSF50249">
    <property type="entry name" value="Nucleic acid-binding proteins"/>
    <property type="match status" value="1"/>
</dbReference>
<dbReference type="PROSITE" id="PS00056">
    <property type="entry name" value="RIBOSOMAL_S17"/>
    <property type="match status" value="1"/>
</dbReference>
<gene>
    <name evidence="1" type="primary">rpsQ</name>
    <name evidence="1" type="synonym">rps17</name>
    <name type="ordered locus">sync_0428</name>
</gene>
<feature type="chain" id="PRO_1000055039" description="Small ribosomal subunit protein uS17">
    <location>
        <begin position="1"/>
        <end position="88"/>
    </location>
</feature>
<comment type="function">
    <text evidence="1">One of the primary rRNA binding proteins, it binds specifically to the 5'-end of 16S ribosomal RNA.</text>
</comment>
<comment type="subunit">
    <text evidence="1">Part of the 30S ribosomal subunit.</text>
</comment>
<comment type="similarity">
    <text evidence="1">Belongs to the universal ribosomal protein uS17 family.</text>
</comment>